<protein>
    <recommendedName>
        <fullName>Uncharacterized protein YceB</fullName>
    </recommendedName>
</protein>
<name>YCEB_BACSU</name>
<gene>
    <name type="primary">yceB</name>
    <name type="ordered locus">BSU02880</name>
</gene>
<organism>
    <name type="scientific">Bacillus subtilis (strain 168)</name>
    <dbReference type="NCBI Taxonomy" id="224308"/>
    <lineage>
        <taxon>Bacteria</taxon>
        <taxon>Bacillati</taxon>
        <taxon>Bacillota</taxon>
        <taxon>Bacilli</taxon>
        <taxon>Bacillales</taxon>
        <taxon>Bacillaceae</taxon>
        <taxon>Bacillus</taxon>
    </lineage>
</organism>
<feature type="chain" id="PRO_0000049474" description="Uncharacterized protein YceB">
    <location>
        <begin position="1"/>
        <end position="331"/>
    </location>
</feature>
<proteinExistence type="predicted"/>
<comment type="similarity">
    <text evidence="1">To bacterial alkanal monooxygenase alpha and beta chains.</text>
</comment>
<comment type="sequence caution" evidence="1">
    <conflict type="erroneous initiation">
        <sequence resource="EMBL-CDS" id="BAA22249"/>
    </conflict>
</comment>
<dbReference type="EMBL" id="AB000617">
    <property type="protein sequence ID" value="BAA22249.1"/>
    <property type="status" value="ALT_INIT"/>
    <property type="molecule type" value="Genomic_DNA"/>
</dbReference>
<dbReference type="EMBL" id="AL009126">
    <property type="protein sequence ID" value="CAB12082.2"/>
    <property type="molecule type" value="Genomic_DNA"/>
</dbReference>
<dbReference type="PIR" id="D69756">
    <property type="entry name" value="D69756"/>
</dbReference>
<dbReference type="RefSeq" id="NP_388170.2">
    <property type="nucleotide sequence ID" value="NC_000964.3"/>
</dbReference>
<dbReference type="RefSeq" id="WP_003246351.1">
    <property type="nucleotide sequence ID" value="NZ_OZ025638.1"/>
</dbReference>
<dbReference type="SMR" id="O34504"/>
<dbReference type="FunCoup" id="O34504">
    <property type="interactions" value="82"/>
</dbReference>
<dbReference type="STRING" id="224308.BSU02880"/>
<dbReference type="PaxDb" id="224308-BSU02880"/>
<dbReference type="EnsemblBacteria" id="CAB12082">
    <property type="protein sequence ID" value="CAB12082"/>
    <property type="gene ID" value="BSU_02880"/>
</dbReference>
<dbReference type="GeneID" id="938371"/>
<dbReference type="KEGG" id="bsu:BSU02880"/>
<dbReference type="PATRIC" id="fig|224308.179.peg.299"/>
<dbReference type="eggNOG" id="COG2141">
    <property type="taxonomic scope" value="Bacteria"/>
</dbReference>
<dbReference type="InParanoid" id="O34504"/>
<dbReference type="OrthoDB" id="9780518at2"/>
<dbReference type="PhylomeDB" id="O34504"/>
<dbReference type="BioCyc" id="BSUB:BSU02880-MONOMER"/>
<dbReference type="Proteomes" id="UP000001570">
    <property type="component" value="Chromosome"/>
</dbReference>
<dbReference type="GO" id="GO:0005829">
    <property type="term" value="C:cytosol"/>
    <property type="evidence" value="ECO:0000318"/>
    <property type="project" value="GO_Central"/>
</dbReference>
<dbReference type="GO" id="GO:0016705">
    <property type="term" value="F:oxidoreductase activity, acting on paired donors, with incorporation or reduction of molecular oxygen"/>
    <property type="evidence" value="ECO:0007669"/>
    <property type="project" value="InterPro"/>
</dbReference>
<dbReference type="CDD" id="cd00347">
    <property type="entry name" value="Flavin_utilizing_monoxygenases"/>
    <property type="match status" value="1"/>
</dbReference>
<dbReference type="FunFam" id="3.20.20.30:FF:000002">
    <property type="entry name" value="LLM class flavin-dependent oxidoreductase"/>
    <property type="match status" value="1"/>
</dbReference>
<dbReference type="Gene3D" id="3.20.20.30">
    <property type="entry name" value="Luciferase-like domain"/>
    <property type="match status" value="1"/>
</dbReference>
<dbReference type="InterPro" id="IPR050766">
    <property type="entry name" value="Bact_Lucif_Oxidored"/>
</dbReference>
<dbReference type="InterPro" id="IPR019949">
    <property type="entry name" value="CmoO-like"/>
</dbReference>
<dbReference type="InterPro" id="IPR011251">
    <property type="entry name" value="Luciferase-like_dom"/>
</dbReference>
<dbReference type="InterPro" id="IPR036661">
    <property type="entry name" value="Luciferase-like_sf"/>
</dbReference>
<dbReference type="NCBIfam" id="TIGR03558">
    <property type="entry name" value="oxido_grp_1"/>
    <property type="match status" value="1"/>
</dbReference>
<dbReference type="PANTHER" id="PTHR30137">
    <property type="entry name" value="LUCIFERASE-LIKE MONOOXYGENASE"/>
    <property type="match status" value="1"/>
</dbReference>
<dbReference type="PANTHER" id="PTHR30137:SF19">
    <property type="entry name" value="LUCIFERASE-LIKE MONOOXYGENASE"/>
    <property type="match status" value="1"/>
</dbReference>
<dbReference type="Pfam" id="PF00296">
    <property type="entry name" value="Bac_luciferase"/>
    <property type="match status" value="1"/>
</dbReference>
<dbReference type="SUPFAM" id="SSF51679">
    <property type="entry name" value="Bacterial luciferase-like"/>
    <property type="match status" value="1"/>
</dbReference>
<evidence type="ECO:0000305" key="1"/>
<keyword id="KW-1185">Reference proteome</keyword>
<reference key="1">
    <citation type="journal article" date="1997" name="Microbiology">
        <title>A 32 kb nucleotide sequence from the region of the lincomycin-resistance gene (22 degrees-25 degrees) of the Bacillus subtilis chromosome and identification of the site of the lin-2 mutation.</title>
        <authorList>
            <person name="Kumano M."/>
            <person name="Tamakoshi A."/>
            <person name="Yamane K."/>
        </authorList>
    </citation>
    <scope>NUCLEOTIDE SEQUENCE [GENOMIC DNA]</scope>
    <source>
        <strain>168</strain>
    </source>
</reference>
<reference key="2">
    <citation type="journal article" date="1997" name="Nature">
        <title>The complete genome sequence of the Gram-positive bacterium Bacillus subtilis.</title>
        <authorList>
            <person name="Kunst F."/>
            <person name="Ogasawara N."/>
            <person name="Moszer I."/>
            <person name="Albertini A.M."/>
            <person name="Alloni G."/>
            <person name="Azevedo V."/>
            <person name="Bertero M.G."/>
            <person name="Bessieres P."/>
            <person name="Bolotin A."/>
            <person name="Borchert S."/>
            <person name="Borriss R."/>
            <person name="Boursier L."/>
            <person name="Brans A."/>
            <person name="Braun M."/>
            <person name="Brignell S.C."/>
            <person name="Bron S."/>
            <person name="Brouillet S."/>
            <person name="Bruschi C.V."/>
            <person name="Caldwell B."/>
            <person name="Capuano V."/>
            <person name="Carter N.M."/>
            <person name="Choi S.-K."/>
            <person name="Codani J.-J."/>
            <person name="Connerton I.F."/>
            <person name="Cummings N.J."/>
            <person name="Daniel R.A."/>
            <person name="Denizot F."/>
            <person name="Devine K.M."/>
            <person name="Duesterhoeft A."/>
            <person name="Ehrlich S.D."/>
            <person name="Emmerson P.T."/>
            <person name="Entian K.-D."/>
            <person name="Errington J."/>
            <person name="Fabret C."/>
            <person name="Ferrari E."/>
            <person name="Foulger D."/>
            <person name="Fritz C."/>
            <person name="Fujita M."/>
            <person name="Fujita Y."/>
            <person name="Fuma S."/>
            <person name="Galizzi A."/>
            <person name="Galleron N."/>
            <person name="Ghim S.-Y."/>
            <person name="Glaser P."/>
            <person name="Goffeau A."/>
            <person name="Golightly E.J."/>
            <person name="Grandi G."/>
            <person name="Guiseppi G."/>
            <person name="Guy B.J."/>
            <person name="Haga K."/>
            <person name="Haiech J."/>
            <person name="Harwood C.R."/>
            <person name="Henaut A."/>
            <person name="Hilbert H."/>
            <person name="Holsappel S."/>
            <person name="Hosono S."/>
            <person name="Hullo M.-F."/>
            <person name="Itaya M."/>
            <person name="Jones L.-M."/>
            <person name="Joris B."/>
            <person name="Karamata D."/>
            <person name="Kasahara Y."/>
            <person name="Klaerr-Blanchard M."/>
            <person name="Klein C."/>
            <person name="Kobayashi Y."/>
            <person name="Koetter P."/>
            <person name="Koningstein G."/>
            <person name="Krogh S."/>
            <person name="Kumano M."/>
            <person name="Kurita K."/>
            <person name="Lapidus A."/>
            <person name="Lardinois S."/>
            <person name="Lauber J."/>
            <person name="Lazarevic V."/>
            <person name="Lee S.-M."/>
            <person name="Levine A."/>
            <person name="Liu H."/>
            <person name="Masuda S."/>
            <person name="Mauel C."/>
            <person name="Medigue C."/>
            <person name="Medina N."/>
            <person name="Mellado R.P."/>
            <person name="Mizuno M."/>
            <person name="Moestl D."/>
            <person name="Nakai S."/>
            <person name="Noback M."/>
            <person name="Noone D."/>
            <person name="O'Reilly M."/>
            <person name="Ogawa K."/>
            <person name="Ogiwara A."/>
            <person name="Oudega B."/>
            <person name="Park S.-H."/>
            <person name="Parro V."/>
            <person name="Pohl T.M."/>
            <person name="Portetelle D."/>
            <person name="Porwollik S."/>
            <person name="Prescott A.M."/>
            <person name="Presecan E."/>
            <person name="Pujic P."/>
            <person name="Purnelle B."/>
            <person name="Rapoport G."/>
            <person name="Rey M."/>
            <person name="Reynolds S."/>
            <person name="Rieger M."/>
            <person name="Rivolta C."/>
            <person name="Rocha E."/>
            <person name="Roche B."/>
            <person name="Rose M."/>
            <person name="Sadaie Y."/>
            <person name="Sato T."/>
            <person name="Scanlan E."/>
            <person name="Schleich S."/>
            <person name="Schroeter R."/>
            <person name="Scoffone F."/>
            <person name="Sekiguchi J."/>
            <person name="Sekowska A."/>
            <person name="Seror S.J."/>
            <person name="Serror P."/>
            <person name="Shin B.-S."/>
            <person name="Soldo B."/>
            <person name="Sorokin A."/>
            <person name="Tacconi E."/>
            <person name="Takagi T."/>
            <person name="Takahashi H."/>
            <person name="Takemaru K."/>
            <person name="Takeuchi M."/>
            <person name="Tamakoshi A."/>
            <person name="Tanaka T."/>
            <person name="Terpstra P."/>
            <person name="Tognoni A."/>
            <person name="Tosato V."/>
            <person name="Uchiyama S."/>
            <person name="Vandenbol M."/>
            <person name="Vannier F."/>
            <person name="Vassarotti A."/>
            <person name="Viari A."/>
            <person name="Wambutt R."/>
            <person name="Wedler E."/>
            <person name="Wedler H."/>
            <person name="Weitzenegger T."/>
            <person name="Winters P."/>
            <person name="Wipat A."/>
            <person name="Yamamoto H."/>
            <person name="Yamane K."/>
            <person name="Yasumoto K."/>
            <person name="Yata K."/>
            <person name="Yoshida K."/>
            <person name="Yoshikawa H.-F."/>
            <person name="Zumstein E."/>
            <person name="Yoshikawa H."/>
            <person name="Danchin A."/>
        </authorList>
    </citation>
    <scope>NUCLEOTIDE SEQUENCE [LARGE SCALE GENOMIC DNA]</scope>
    <source>
        <strain>168</strain>
    </source>
</reference>
<sequence length="331" mass="36884">MIHLSILDQAPVSKGESPVTTLQHSVELAQLSEQWGYKRYWFAEHHSTKGLASTAPEIMIARIAAQTNTIRVGSGGVLLPQYSPFKVAETFRQLEALYPNRIDLGVGRSPGGTTKTRLALTDGVKKSLTEFNRQLQDVSYFLTDSLPPDHPYAGIKAAPLIGTAPELWVLGLGENSARRAAHQGIGYVFGHFINPERGENAFRIYRESFRPSAHFSNPSALFTIFVICAKTDEEAEELALSQDLWLLRVGKGLDSRVPSIEEAKAHPYTASDKKLIEENRKRMVIGSPTTVKQQLLDLTGCYETNEIMVLCNVFDFEAKKESYERLAELFL</sequence>
<accession>O34504</accession>